<feature type="transit peptide" description="Mitochondrion" evidence="2">
    <location>
        <begin position="1"/>
        <end status="unknown"/>
    </location>
</feature>
<feature type="chain" id="PRO_0000323002" description="Probable hydroxyacid-oxoacid transhydrogenase, mitochondrial">
    <location>
        <begin status="unknown"/>
        <end position="547"/>
    </location>
</feature>
<dbReference type="EC" id="1.1.99.24"/>
<dbReference type="EMBL" id="AAFI02000153">
    <property type="protein sequence ID" value="EAL62385.1"/>
    <property type="molecule type" value="Genomic_DNA"/>
</dbReference>
<dbReference type="RefSeq" id="XP_635889.1">
    <property type="nucleotide sequence ID" value="XM_630797.1"/>
</dbReference>
<dbReference type="SMR" id="Q54GJ7"/>
<dbReference type="FunCoup" id="Q54GJ7">
    <property type="interactions" value="39"/>
</dbReference>
<dbReference type="STRING" id="44689.Q54GJ7"/>
<dbReference type="PaxDb" id="44689-DDB0252839"/>
<dbReference type="EnsemblProtists" id="EAL62385">
    <property type="protein sequence ID" value="EAL62385"/>
    <property type="gene ID" value="DDB_G0290111"/>
</dbReference>
<dbReference type="GeneID" id="8627488"/>
<dbReference type="KEGG" id="ddi:DDB_G0290111"/>
<dbReference type="dictyBase" id="DDB_G0290111">
    <property type="gene designation" value="adhfe1"/>
</dbReference>
<dbReference type="VEuPathDB" id="AmoebaDB:DDB_G0290111"/>
<dbReference type="eggNOG" id="KOG3857">
    <property type="taxonomic scope" value="Eukaryota"/>
</dbReference>
<dbReference type="HOGENOM" id="CLU_007207_0_7_1"/>
<dbReference type="InParanoid" id="Q54GJ7"/>
<dbReference type="OMA" id="NLMGAGC"/>
<dbReference type="PhylomeDB" id="Q54GJ7"/>
<dbReference type="Reactome" id="R-DDI-880009">
    <property type="pathway name" value="Interconversion of 2-oxoglutarate and 2-hydroxyglutarate"/>
</dbReference>
<dbReference type="PRO" id="PR:Q54GJ7"/>
<dbReference type="Proteomes" id="UP000002195">
    <property type="component" value="Chromosome 5"/>
</dbReference>
<dbReference type="GO" id="GO:0005739">
    <property type="term" value="C:mitochondrion"/>
    <property type="evidence" value="ECO:0000250"/>
    <property type="project" value="UniProtKB"/>
</dbReference>
<dbReference type="GO" id="GO:0004022">
    <property type="term" value="F:alcohol dehydrogenase (NAD+) activity"/>
    <property type="evidence" value="ECO:0000318"/>
    <property type="project" value="GO_Central"/>
</dbReference>
<dbReference type="GO" id="GO:0047988">
    <property type="term" value="F:hydroxyacid-oxoacid transhydrogenase activity"/>
    <property type="evidence" value="ECO:0000250"/>
    <property type="project" value="UniProtKB"/>
</dbReference>
<dbReference type="GO" id="GO:0046872">
    <property type="term" value="F:metal ion binding"/>
    <property type="evidence" value="ECO:0007669"/>
    <property type="project" value="InterPro"/>
</dbReference>
<dbReference type="GO" id="GO:0019552">
    <property type="term" value="P:glutamate catabolic process via 2-hydroxyglutarate"/>
    <property type="evidence" value="ECO:0000250"/>
    <property type="project" value="UniProtKB"/>
</dbReference>
<dbReference type="CDD" id="cd08190">
    <property type="entry name" value="HOT"/>
    <property type="match status" value="1"/>
</dbReference>
<dbReference type="FunFam" id="1.20.1090.10:FF:000003">
    <property type="entry name" value="Probable hydroxyacid-oxoacid transhydrogenase, mitochondrial"/>
    <property type="match status" value="1"/>
</dbReference>
<dbReference type="Gene3D" id="3.40.50.1970">
    <property type="match status" value="1"/>
</dbReference>
<dbReference type="Gene3D" id="1.20.1090.10">
    <property type="entry name" value="Dehydroquinate synthase-like - alpha domain"/>
    <property type="match status" value="1"/>
</dbReference>
<dbReference type="InterPro" id="IPR001670">
    <property type="entry name" value="ADH_Fe/GldA"/>
</dbReference>
<dbReference type="InterPro" id="IPR056798">
    <property type="entry name" value="ADH_Fe_C"/>
</dbReference>
<dbReference type="InterPro" id="IPR039697">
    <property type="entry name" value="Alcohol_dehydrogenase_Fe"/>
</dbReference>
<dbReference type="InterPro" id="IPR042157">
    <property type="entry name" value="HOT"/>
</dbReference>
<dbReference type="PANTHER" id="PTHR11496">
    <property type="entry name" value="ALCOHOL DEHYDROGENASE"/>
    <property type="match status" value="1"/>
</dbReference>
<dbReference type="PANTHER" id="PTHR11496:SF83">
    <property type="entry name" value="HYDROXYACID-OXOACID TRANSHYDROGENASE, MITOCHONDRIAL"/>
    <property type="match status" value="1"/>
</dbReference>
<dbReference type="Pfam" id="PF25137">
    <property type="entry name" value="ADH_Fe_C"/>
    <property type="match status" value="1"/>
</dbReference>
<dbReference type="Pfam" id="PF00465">
    <property type="entry name" value="Fe-ADH"/>
    <property type="match status" value="1"/>
</dbReference>
<dbReference type="SUPFAM" id="SSF56796">
    <property type="entry name" value="Dehydroquinate synthase-like"/>
    <property type="match status" value="1"/>
</dbReference>
<comment type="function">
    <text evidence="1">Catalyzes the cofactor-independent reversible oxidation of gamma-hydroxybutyrate (GHB) to succinic semialdehyde (SSA) coupled to reduction of 2-ketoglutarate (2-KG) to D-2-hydroxyglutarate (D-2-HG). L-3-hydroxybutyrate (L-3-OHB) is also a substrate for HOT when using 2-KG as hydrogen acceptor, resulting in the formation of D-2-HG (By similarity).</text>
</comment>
<comment type="catalytic activity">
    <reaction>
        <text>(S)-3-hydroxybutanoate + 2-oxoglutarate = (R)-2-hydroxyglutarate + acetoacetate</text>
        <dbReference type="Rhea" id="RHEA:23048"/>
        <dbReference type="ChEBI" id="CHEBI:11047"/>
        <dbReference type="ChEBI" id="CHEBI:13705"/>
        <dbReference type="ChEBI" id="CHEBI:15801"/>
        <dbReference type="ChEBI" id="CHEBI:16810"/>
        <dbReference type="EC" id="1.1.99.24"/>
    </reaction>
</comment>
<comment type="catalytic activity">
    <reaction>
        <text>4-hydroxybutanoate + 2-oxoglutarate = (R)-2-hydroxyglutarate + succinate semialdehyde</text>
        <dbReference type="Rhea" id="RHEA:24734"/>
        <dbReference type="ChEBI" id="CHEBI:15801"/>
        <dbReference type="ChEBI" id="CHEBI:16724"/>
        <dbReference type="ChEBI" id="CHEBI:16810"/>
        <dbReference type="ChEBI" id="CHEBI:57706"/>
        <dbReference type="EC" id="1.1.99.24"/>
    </reaction>
</comment>
<comment type="subcellular location">
    <subcellularLocation>
        <location evidence="1">Mitochondrion</location>
    </subcellularLocation>
</comment>
<comment type="similarity">
    <text evidence="3">Belongs to the iron-containing alcohol dehydrogenase family. Hydroxyacid-oxoacid transhydrogenase subfamily.</text>
</comment>
<sequence>MTIIITKIADKIIKSNRVKNTLQDIHIHSSNCGCHGSFKSNSVMNQTFSSFSSLTTEKNEQQQQQLFKQFSNSKPIPMGRKVELDTSKVIDSVYFGNTENNNYRTNKGNTDYAFEASANNIRFGSGVTYEVGYDLLDMNCRNVIVFTDNNLLKLVDTDKESAVAKCLYSLEKCGIKYTIYSDVSIEPTDTSFKDAISVMGKGRYDGVVAVGGGSVMDTAKAANLYNSYPPADNDFLAYINPPIGKGLLVPGPLKRPLIAIPTTCGTASETTGVCILDIKLGDGLSAKTGIASRHLKPILGLVDPDNLLTLPSNVAISSGFDQLCHALESFTAIPFNQRSPRPLAPNQRPSYQGANPVSDVWSLRSLEMLCKNIHRFVLNPNDDYARSQMMLAASYAGLGFGNSGVHACHGMSYSISSMVKDYKPEGYYGLKKNLIPHGQSVILSAPAVFKFTAPSNPERHLLLAKIMGADISNASESDAGVLLSNQIVKLMKLLNVPNGLQALGYKESDIDSLVKGTLPQHRVTKLMPKQATYDDLYKLFKDSMTIY</sequence>
<accession>Q54GJ7</accession>
<proteinExistence type="inferred from homology"/>
<protein>
    <recommendedName>
        <fullName>Probable hydroxyacid-oxoacid transhydrogenase, mitochondrial</fullName>
        <shortName>HOT</shortName>
        <ecNumber>1.1.99.24</ecNumber>
    </recommendedName>
</protein>
<name>HOT_DICDI</name>
<organism>
    <name type="scientific">Dictyostelium discoideum</name>
    <name type="common">Social amoeba</name>
    <dbReference type="NCBI Taxonomy" id="44689"/>
    <lineage>
        <taxon>Eukaryota</taxon>
        <taxon>Amoebozoa</taxon>
        <taxon>Evosea</taxon>
        <taxon>Eumycetozoa</taxon>
        <taxon>Dictyostelia</taxon>
        <taxon>Dictyosteliales</taxon>
        <taxon>Dictyosteliaceae</taxon>
        <taxon>Dictyostelium</taxon>
    </lineage>
</organism>
<evidence type="ECO:0000250" key="1"/>
<evidence type="ECO:0000255" key="2"/>
<evidence type="ECO:0000305" key="3"/>
<keyword id="KW-0496">Mitochondrion</keyword>
<keyword id="KW-0560">Oxidoreductase</keyword>
<keyword id="KW-1185">Reference proteome</keyword>
<keyword id="KW-0809">Transit peptide</keyword>
<reference key="1">
    <citation type="journal article" date="2005" name="Nature">
        <title>The genome of the social amoeba Dictyostelium discoideum.</title>
        <authorList>
            <person name="Eichinger L."/>
            <person name="Pachebat J.A."/>
            <person name="Gloeckner G."/>
            <person name="Rajandream M.A."/>
            <person name="Sucgang R."/>
            <person name="Berriman M."/>
            <person name="Song J."/>
            <person name="Olsen R."/>
            <person name="Szafranski K."/>
            <person name="Xu Q."/>
            <person name="Tunggal B."/>
            <person name="Kummerfeld S."/>
            <person name="Madera M."/>
            <person name="Konfortov B.A."/>
            <person name="Rivero F."/>
            <person name="Bankier A.T."/>
            <person name="Lehmann R."/>
            <person name="Hamlin N."/>
            <person name="Davies R."/>
            <person name="Gaudet P."/>
            <person name="Fey P."/>
            <person name="Pilcher K."/>
            <person name="Chen G."/>
            <person name="Saunders D."/>
            <person name="Sodergren E.J."/>
            <person name="Davis P."/>
            <person name="Kerhornou A."/>
            <person name="Nie X."/>
            <person name="Hall N."/>
            <person name="Anjard C."/>
            <person name="Hemphill L."/>
            <person name="Bason N."/>
            <person name="Farbrother P."/>
            <person name="Desany B."/>
            <person name="Just E."/>
            <person name="Morio T."/>
            <person name="Rost R."/>
            <person name="Churcher C.M."/>
            <person name="Cooper J."/>
            <person name="Haydock S."/>
            <person name="van Driessche N."/>
            <person name="Cronin A."/>
            <person name="Goodhead I."/>
            <person name="Muzny D.M."/>
            <person name="Mourier T."/>
            <person name="Pain A."/>
            <person name="Lu M."/>
            <person name="Harper D."/>
            <person name="Lindsay R."/>
            <person name="Hauser H."/>
            <person name="James K.D."/>
            <person name="Quiles M."/>
            <person name="Madan Babu M."/>
            <person name="Saito T."/>
            <person name="Buchrieser C."/>
            <person name="Wardroper A."/>
            <person name="Felder M."/>
            <person name="Thangavelu M."/>
            <person name="Johnson D."/>
            <person name="Knights A."/>
            <person name="Loulseged H."/>
            <person name="Mungall K.L."/>
            <person name="Oliver K."/>
            <person name="Price C."/>
            <person name="Quail M.A."/>
            <person name="Urushihara H."/>
            <person name="Hernandez J."/>
            <person name="Rabbinowitsch E."/>
            <person name="Steffen D."/>
            <person name="Sanders M."/>
            <person name="Ma J."/>
            <person name="Kohara Y."/>
            <person name="Sharp S."/>
            <person name="Simmonds M.N."/>
            <person name="Spiegler S."/>
            <person name="Tivey A."/>
            <person name="Sugano S."/>
            <person name="White B."/>
            <person name="Walker D."/>
            <person name="Woodward J.R."/>
            <person name="Winckler T."/>
            <person name="Tanaka Y."/>
            <person name="Shaulsky G."/>
            <person name="Schleicher M."/>
            <person name="Weinstock G.M."/>
            <person name="Rosenthal A."/>
            <person name="Cox E.C."/>
            <person name="Chisholm R.L."/>
            <person name="Gibbs R.A."/>
            <person name="Loomis W.F."/>
            <person name="Platzer M."/>
            <person name="Kay R.R."/>
            <person name="Williams J.G."/>
            <person name="Dear P.H."/>
            <person name="Noegel A.A."/>
            <person name="Barrell B.G."/>
            <person name="Kuspa A."/>
        </authorList>
    </citation>
    <scope>NUCLEOTIDE SEQUENCE [LARGE SCALE GENOMIC DNA]</scope>
    <source>
        <strain>AX4</strain>
    </source>
</reference>
<gene>
    <name type="primary">adhfe1</name>
    <name type="ORF">DDB_G0290111</name>
</gene>